<keyword id="KW-0150">Chloroplast</keyword>
<keyword id="KW-0249">Electron transport</keyword>
<keyword id="KW-0349">Heme</keyword>
<keyword id="KW-0408">Iron</keyword>
<keyword id="KW-0472">Membrane</keyword>
<keyword id="KW-0479">Metal-binding</keyword>
<keyword id="KW-0602">Photosynthesis</keyword>
<keyword id="KW-0604">Photosystem II</keyword>
<keyword id="KW-0934">Plastid</keyword>
<keyword id="KW-0793">Thylakoid</keyword>
<keyword id="KW-0812">Transmembrane</keyword>
<keyword id="KW-1133">Transmembrane helix</keyword>
<keyword id="KW-0813">Transport</keyword>
<gene>
    <name evidence="1" type="primary">psbE</name>
</gene>
<feature type="chain" id="PRO_0000200300" description="Cytochrome b559 subunit alpha">
    <location>
        <begin position="1"/>
        <end position="83"/>
    </location>
</feature>
<feature type="transmembrane region" description="Helical" evidence="1">
    <location>
        <begin position="21"/>
        <end position="35"/>
    </location>
</feature>
<feature type="binding site" description="axial binding residue" evidence="1">
    <location>
        <position position="23"/>
    </location>
    <ligand>
        <name>heme</name>
        <dbReference type="ChEBI" id="CHEBI:30413"/>
        <note>ligand shared with beta subunit</note>
    </ligand>
    <ligandPart>
        <name>Fe</name>
        <dbReference type="ChEBI" id="CHEBI:18248"/>
    </ligandPart>
</feature>
<geneLocation type="chloroplast"/>
<proteinExistence type="inferred from homology"/>
<sequence length="83" mass="9387">MSGSTGERSFADIITSIRYWVIHSITIPSLFIAGWLFVSTGLAYDVFGSPRPNEYFTESRQGIPLITGRFDSLEQLDEFSRSF</sequence>
<organism>
    <name type="scientific">Beta vulgaris</name>
    <name type="common">Sugar beet</name>
    <dbReference type="NCBI Taxonomy" id="161934"/>
    <lineage>
        <taxon>Eukaryota</taxon>
        <taxon>Viridiplantae</taxon>
        <taxon>Streptophyta</taxon>
        <taxon>Embryophyta</taxon>
        <taxon>Tracheophyta</taxon>
        <taxon>Spermatophyta</taxon>
        <taxon>Magnoliopsida</taxon>
        <taxon>eudicotyledons</taxon>
        <taxon>Gunneridae</taxon>
        <taxon>Pentapetalae</taxon>
        <taxon>Caryophyllales</taxon>
        <taxon>Chenopodiaceae</taxon>
        <taxon>Betoideae</taxon>
        <taxon>Beta</taxon>
    </lineage>
</organism>
<protein>
    <recommendedName>
        <fullName evidence="1">Cytochrome b559 subunit alpha</fullName>
    </recommendedName>
    <alternativeName>
        <fullName evidence="1">PSII reaction center subunit V</fullName>
    </alternativeName>
</protein>
<accession>P69382</accession>
<accession>P09197</accession>
<reference key="1">
    <citation type="journal article" date="1995" name="Theor. Appl. Genet.">
        <title>Mapping of a chloroplast RFLP marker associated with the CMS cytoplasm of sugar beet (Beta vulgaris).</title>
        <authorList>
            <person name="Ran Z."/>
            <person name="Michaelis G."/>
        </authorList>
    </citation>
    <scope>NUCLEOTIDE SEQUENCE [GENOMIC DNA]</scope>
    <source>
        <strain>cv. Altissima</strain>
        <tissue>Leaf</tissue>
    </source>
</reference>
<reference key="2">
    <citation type="journal article" date="1995" name="Curr. Genet.">
        <title>The chloroplast trnP-trnW-petG gene cluster in the mitochondrial genomes of Beta vulgaris, B. trigyna and B. webbiana: evolutionary aspects.</title>
        <authorList>
            <person name="Kubo T."/>
            <person name="Yanai Y."/>
            <person name="Kinoshita T."/>
            <person name="Mikami T."/>
        </authorList>
    </citation>
    <scope>NUCLEOTIDE SEQUENCE [GENOMIC DNA]</scope>
    <source>
        <strain>cv. TK81-O</strain>
        <tissue>Leaf</tissue>
    </source>
</reference>
<comment type="function">
    <text evidence="1">This b-type cytochrome is tightly associated with the reaction center of photosystem II (PSII). PSII is a light-driven water:plastoquinone oxidoreductase that uses light energy to abstract electrons from H(2)O, generating O(2) and a proton gradient subsequently used for ATP formation. It consists of a core antenna complex that captures photons, and an electron transfer chain that converts photonic excitation into a charge separation.</text>
</comment>
<comment type="cofactor">
    <cofactor evidence="1">
        <name>heme b</name>
        <dbReference type="ChEBI" id="CHEBI:60344"/>
    </cofactor>
    <text evidence="1">With its partner (PsbF) binds heme. PSII binds additional chlorophylls, carotenoids and specific lipids.</text>
</comment>
<comment type="subunit">
    <text evidence="1">Heterodimer of an alpha subunit and a beta subunit. PSII is composed of 1 copy each of membrane proteins PsbA, PsbB, PsbC, PsbD, PsbE, PsbF, PsbH, PsbI, PsbJ, PsbK, PsbL, PsbM, PsbT, PsbX, PsbY, PsbZ, Psb30/Ycf12, at least 3 peripheral proteins of the oxygen-evolving complex and a large number of cofactors. It forms dimeric complexes.</text>
</comment>
<comment type="subcellular location">
    <subcellularLocation>
        <location evidence="1">Plastid</location>
        <location evidence="1">Chloroplast thylakoid membrane</location>
        <topology evidence="1">Single-pass membrane protein</topology>
    </subcellularLocation>
</comment>
<comment type="similarity">
    <text evidence="1">Belongs to the PsbE/PsbF family.</text>
</comment>
<comment type="sequence caution" evidence="2">
    <conflict type="erroneous initiation">
        <sequence resource="EMBL-CDS" id="CAA60967"/>
    </conflict>
    <text>Extended N-terminus.</text>
</comment>
<comment type="sequence caution" evidence="2">
    <conflict type="erroneous initiation">
        <sequence resource="EMBL-CDS" id="CAA60972"/>
    </conflict>
    <text>Extended N-terminus.</text>
</comment>
<name>PSBE_BETVU</name>
<dbReference type="EMBL" id="X87636">
    <property type="protein sequence ID" value="CAA60967.1"/>
    <property type="status" value="ALT_INIT"/>
    <property type="molecule type" value="Genomic_DNA"/>
</dbReference>
<dbReference type="EMBL" id="X87637">
    <property type="protein sequence ID" value="CAA60972.1"/>
    <property type="status" value="ALT_INIT"/>
    <property type="molecule type" value="Genomic_DNA"/>
</dbReference>
<dbReference type="EMBL" id="D38019">
    <property type="protein sequence ID" value="BAA07218.1"/>
    <property type="molecule type" value="Genomic_DNA"/>
</dbReference>
<dbReference type="SMR" id="P69382"/>
<dbReference type="OMA" id="VRYWVIH"/>
<dbReference type="GO" id="GO:0009535">
    <property type="term" value="C:chloroplast thylakoid membrane"/>
    <property type="evidence" value="ECO:0007669"/>
    <property type="project" value="UniProtKB-SubCell"/>
</dbReference>
<dbReference type="GO" id="GO:0009539">
    <property type="term" value="C:photosystem II reaction center"/>
    <property type="evidence" value="ECO:0007669"/>
    <property type="project" value="InterPro"/>
</dbReference>
<dbReference type="GO" id="GO:0009055">
    <property type="term" value="F:electron transfer activity"/>
    <property type="evidence" value="ECO:0007669"/>
    <property type="project" value="UniProtKB-UniRule"/>
</dbReference>
<dbReference type="GO" id="GO:0020037">
    <property type="term" value="F:heme binding"/>
    <property type="evidence" value="ECO:0007669"/>
    <property type="project" value="InterPro"/>
</dbReference>
<dbReference type="GO" id="GO:0005506">
    <property type="term" value="F:iron ion binding"/>
    <property type="evidence" value="ECO:0007669"/>
    <property type="project" value="UniProtKB-UniRule"/>
</dbReference>
<dbReference type="GO" id="GO:0009767">
    <property type="term" value="P:photosynthetic electron transport chain"/>
    <property type="evidence" value="ECO:0007669"/>
    <property type="project" value="InterPro"/>
</dbReference>
<dbReference type="Gene3D" id="1.20.5.860">
    <property type="entry name" value="Photosystem II cytochrome b559, alpha subunit"/>
    <property type="match status" value="1"/>
</dbReference>
<dbReference type="HAMAP" id="MF_00642">
    <property type="entry name" value="PSII_PsbE"/>
    <property type="match status" value="1"/>
</dbReference>
<dbReference type="InterPro" id="IPR006217">
    <property type="entry name" value="PSII_cyt_b559_asu"/>
</dbReference>
<dbReference type="InterPro" id="IPR037025">
    <property type="entry name" value="PSII_cyt_b559_asu_sf"/>
</dbReference>
<dbReference type="InterPro" id="IPR006216">
    <property type="entry name" value="PSII_cyt_b559_CS"/>
</dbReference>
<dbReference type="InterPro" id="IPR013081">
    <property type="entry name" value="PSII_cyt_b559_N"/>
</dbReference>
<dbReference type="InterPro" id="IPR013082">
    <property type="entry name" value="PSII_cytb559_asu_lum"/>
</dbReference>
<dbReference type="NCBIfam" id="TIGR01332">
    <property type="entry name" value="cyt_b559_alpha"/>
    <property type="match status" value="1"/>
</dbReference>
<dbReference type="PANTHER" id="PTHR33391">
    <property type="entry name" value="CYTOCHROME B559 SUBUNIT BETA-RELATED"/>
    <property type="match status" value="1"/>
</dbReference>
<dbReference type="PANTHER" id="PTHR33391:SF9">
    <property type="entry name" value="CYTOCHROME B559 SUBUNIT BETA-RELATED"/>
    <property type="match status" value="1"/>
</dbReference>
<dbReference type="Pfam" id="PF00283">
    <property type="entry name" value="Cytochrom_B559"/>
    <property type="match status" value="1"/>
</dbReference>
<dbReference type="Pfam" id="PF00284">
    <property type="entry name" value="Cytochrom_B559a"/>
    <property type="match status" value="1"/>
</dbReference>
<dbReference type="PIRSF" id="PIRSF000036">
    <property type="entry name" value="PsbE"/>
    <property type="match status" value="1"/>
</dbReference>
<dbReference type="SUPFAM" id="SSF161045">
    <property type="entry name" value="Cytochrome b559 subunits"/>
    <property type="match status" value="1"/>
</dbReference>
<dbReference type="PROSITE" id="PS00537">
    <property type="entry name" value="CYTOCHROME_B559"/>
    <property type="match status" value="1"/>
</dbReference>
<evidence type="ECO:0000255" key="1">
    <source>
        <dbReference type="HAMAP-Rule" id="MF_00642"/>
    </source>
</evidence>
<evidence type="ECO:0000305" key="2"/>